<sequence length="413" mass="46576">MKIYLVGGAVRDALLGLPVKDKDWVVVGATPQEMLDAGYQQVGRDFPVFLHPQTHEEYALARTERKSGSGYTGFTCYAAPDVTLEADLQRRDLTINALARDDDGQIIDPYHGRRDLEARLLRHVSPAFGEDPLRVLRVARFAARYAHLSFRIADETLALMREMTAAGELEHLTPERVWKETENALTTRNPQVYFQVLRDCGALRVLFPEIDALFGVPAPAKWHPEIDTGVHTLMTLSMAAMLSPQLDVRFATLCHDLGKGLTPKNLWPRHHGHGPAGVKLVEQLCQRLRVPNDLRDLAKLVAEYHDLIHTFPILQPKTIVKLFDAIDAWRKPQRVEQIALTSEADVRGRTGFEASDYPQGRWLREAWQVAQAVPTKEVVEAGFKGIEIREELTKRRIAAVANWKEKRCPNPAS</sequence>
<accession>B4T674</accession>
<proteinExistence type="inferred from homology"/>
<organism>
    <name type="scientific">Salmonella newport (strain SL254)</name>
    <dbReference type="NCBI Taxonomy" id="423368"/>
    <lineage>
        <taxon>Bacteria</taxon>
        <taxon>Pseudomonadati</taxon>
        <taxon>Pseudomonadota</taxon>
        <taxon>Gammaproteobacteria</taxon>
        <taxon>Enterobacterales</taxon>
        <taxon>Enterobacteriaceae</taxon>
        <taxon>Salmonella</taxon>
    </lineage>
</organism>
<name>CCA_SALNS</name>
<keyword id="KW-0067">ATP-binding</keyword>
<keyword id="KW-0378">Hydrolase</keyword>
<keyword id="KW-0460">Magnesium</keyword>
<keyword id="KW-0479">Metal-binding</keyword>
<keyword id="KW-0511">Multifunctional enzyme</keyword>
<keyword id="KW-0533">Nickel</keyword>
<keyword id="KW-0547">Nucleotide-binding</keyword>
<keyword id="KW-0548">Nucleotidyltransferase</keyword>
<keyword id="KW-0692">RNA repair</keyword>
<keyword id="KW-0694">RNA-binding</keyword>
<keyword id="KW-0808">Transferase</keyword>
<keyword id="KW-0819">tRNA processing</keyword>
<reference key="1">
    <citation type="journal article" date="2011" name="J. Bacteriol.">
        <title>Comparative genomics of 28 Salmonella enterica isolates: evidence for CRISPR-mediated adaptive sublineage evolution.</title>
        <authorList>
            <person name="Fricke W.F."/>
            <person name="Mammel M.K."/>
            <person name="McDermott P.F."/>
            <person name="Tartera C."/>
            <person name="White D.G."/>
            <person name="Leclerc J.E."/>
            <person name="Ravel J."/>
            <person name="Cebula T.A."/>
        </authorList>
    </citation>
    <scope>NUCLEOTIDE SEQUENCE [LARGE SCALE GENOMIC DNA]</scope>
    <source>
        <strain>SL254</strain>
    </source>
</reference>
<feature type="chain" id="PRO_1000140050" description="Multifunctional CCA protein">
    <location>
        <begin position="1"/>
        <end position="413"/>
    </location>
</feature>
<feature type="domain" description="HD" evidence="1">
    <location>
        <begin position="228"/>
        <end position="329"/>
    </location>
</feature>
<feature type="binding site" evidence="1">
    <location>
        <position position="8"/>
    </location>
    <ligand>
        <name>ATP</name>
        <dbReference type="ChEBI" id="CHEBI:30616"/>
    </ligand>
</feature>
<feature type="binding site" evidence="1">
    <location>
        <position position="8"/>
    </location>
    <ligand>
        <name>CTP</name>
        <dbReference type="ChEBI" id="CHEBI:37563"/>
    </ligand>
</feature>
<feature type="binding site" evidence="1">
    <location>
        <position position="11"/>
    </location>
    <ligand>
        <name>ATP</name>
        <dbReference type="ChEBI" id="CHEBI:30616"/>
    </ligand>
</feature>
<feature type="binding site" evidence="1">
    <location>
        <position position="11"/>
    </location>
    <ligand>
        <name>CTP</name>
        <dbReference type="ChEBI" id="CHEBI:37563"/>
    </ligand>
</feature>
<feature type="binding site" evidence="1">
    <location>
        <position position="21"/>
    </location>
    <ligand>
        <name>Mg(2+)</name>
        <dbReference type="ChEBI" id="CHEBI:18420"/>
    </ligand>
</feature>
<feature type="binding site" evidence="1">
    <location>
        <position position="23"/>
    </location>
    <ligand>
        <name>Mg(2+)</name>
        <dbReference type="ChEBI" id="CHEBI:18420"/>
    </ligand>
</feature>
<feature type="binding site" evidence="1">
    <location>
        <position position="91"/>
    </location>
    <ligand>
        <name>ATP</name>
        <dbReference type="ChEBI" id="CHEBI:30616"/>
    </ligand>
</feature>
<feature type="binding site" evidence="1">
    <location>
        <position position="91"/>
    </location>
    <ligand>
        <name>CTP</name>
        <dbReference type="ChEBI" id="CHEBI:37563"/>
    </ligand>
</feature>
<feature type="binding site" evidence="1">
    <location>
        <position position="137"/>
    </location>
    <ligand>
        <name>ATP</name>
        <dbReference type="ChEBI" id="CHEBI:30616"/>
    </ligand>
</feature>
<feature type="binding site" evidence="1">
    <location>
        <position position="137"/>
    </location>
    <ligand>
        <name>CTP</name>
        <dbReference type="ChEBI" id="CHEBI:37563"/>
    </ligand>
</feature>
<feature type="binding site" evidence="1">
    <location>
        <position position="140"/>
    </location>
    <ligand>
        <name>ATP</name>
        <dbReference type="ChEBI" id="CHEBI:30616"/>
    </ligand>
</feature>
<feature type="binding site" evidence="1">
    <location>
        <position position="140"/>
    </location>
    <ligand>
        <name>CTP</name>
        <dbReference type="ChEBI" id="CHEBI:37563"/>
    </ligand>
</feature>
<gene>
    <name evidence="1" type="primary">cca</name>
    <name type="ordered locus">SNSL254_A3464</name>
</gene>
<evidence type="ECO:0000255" key="1">
    <source>
        <dbReference type="HAMAP-Rule" id="MF_01261"/>
    </source>
</evidence>
<dbReference type="EC" id="2.7.7.72" evidence="1"/>
<dbReference type="EC" id="3.1.3.-" evidence="1"/>
<dbReference type="EC" id="3.1.4.-" evidence="1"/>
<dbReference type="EMBL" id="CP001113">
    <property type="protein sequence ID" value="ACF61711.1"/>
    <property type="molecule type" value="Genomic_DNA"/>
</dbReference>
<dbReference type="RefSeq" id="WP_000708447.1">
    <property type="nucleotide sequence ID" value="NZ_CCMR01000001.1"/>
</dbReference>
<dbReference type="SMR" id="B4T674"/>
<dbReference type="KEGG" id="see:SNSL254_A3464"/>
<dbReference type="HOGENOM" id="CLU_015961_1_1_6"/>
<dbReference type="Proteomes" id="UP000008824">
    <property type="component" value="Chromosome"/>
</dbReference>
<dbReference type="GO" id="GO:0005524">
    <property type="term" value="F:ATP binding"/>
    <property type="evidence" value="ECO:0007669"/>
    <property type="project" value="UniProtKB-UniRule"/>
</dbReference>
<dbReference type="GO" id="GO:0004810">
    <property type="term" value="F:CCA tRNA nucleotidyltransferase activity"/>
    <property type="evidence" value="ECO:0007669"/>
    <property type="project" value="UniProtKB-UniRule"/>
</dbReference>
<dbReference type="GO" id="GO:0004112">
    <property type="term" value="F:cyclic-nucleotide phosphodiesterase activity"/>
    <property type="evidence" value="ECO:0007669"/>
    <property type="project" value="UniProtKB-UniRule"/>
</dbReference>
<dbReference type="GO" id="GO:0000287">
    <property type="term" value="F:magnesium ion binding"/>
    <property type="evidence" value="ECO:0007669"/>
    <property type="project" value="UniProtKB-UniRule"/>
</dbReference>
<dbReference type="GO" id="GO:0016791">
    <property type="term" value="F:phosphatase activity"/>
    <property type="evidence" value="ECO:0007669"/>
    <property type="project" value="UniProtKB-UniRule"/>
</dbReference>
<dbReference type="GO" id="GO:0000049">
    <property type="term" value="F:tRNA binding"/>
    <property type="evidence" value="ECO:0007669"/>
    <property type="project" value="UniProtKB-UniRule"/>
</dbReference>
<dbReference type="GO" id="GO:0042245">
    <property type="term" value="P:RNA repair"/>
    <property type="evidence" value="ECO:0007669"/>
    <property type="project" value="UniProtKB-KW"/>
</dbReference>
<dbReference type="GO" id="GO:0001680">
    <property type="term" value="P:tRNA 3'-terminal CCA addition"/>
    <property type="evidence" value="ECO:0007669"/>
    <property type="project" value="UniProtKB-UniRule"/>
</dbReference>
<dbReference type="CDD" id="cd00077">
    <property type="entry name" value="HDc"/>
    <property type="match status" value="1"/>
</dbReference>
<dbReference type="CDD" id="cd05398">
    <property type="entry name" value="NT_ClassII-CCAase"/>
    <property type="match status" value="1"/>
</dbReference>
<dbReference type="FunFam" id="1.10.3090.10:FF:000001">
    <property type="entry name" value="Multifunctional CCA protein"/>
    <property type="match status" value="1"/>
</dbReference>
<dbReference type="FunFam" id="3.30.460.10:FF:000016">
    <property type="entry name" value="Multifunctional CCA protein"/>
    <property type="match status" value="1"/>
</dbReference>
<dbReference type="Gene3D" id="3.30.460.10">
    <property type="entry name" value="Beta Polymerase, domain 2"/>
    <property type="match status" value="1"/>
</dbReference>
<dbReference type="Gene3D" id="1.10.3090.10">
    <property type="entry name" value="cca-adding enzyme, domain 2"/>
    <property type="match status" value="1"/>
</dbReference>
<dbReference type="HAMAP" id="MF_01261">
    <property type="entry name" value="CCA_bact_type1"/>
    <property type="match status" value="1"/>
</dbReference>
<dbReference type="HAMAP" id="MF_01262">
    <property type="entry name" value="CCA_bact_type2"/>
    <property type="match status" value="1"/>
</dbReference>
<dbReference type="InterPro" id="IPR012006">
    <property type="entry name" value="CCA_bact"/>
</dbReference>
<dbReference type="InterPro" id="IPR003607">
    <property type="entry name" value="HD/PDEase_dom"/>
</dbReference>
<dbReference type="InterPro" id="IPR006674">
    <property type="entry name" value="HD_domain"/>
</dbReference>
<dbReference type="InterPro" id="IPR043519">
    <property type="entry name" value="NT_sf"/>
</dbReference>
<dbReference type="InterPro" id="IPR002646">
    <property type="entry name" value="PolA_pol_head_dom"/>
</dbReference>
<dbReference type="InterPro" id="IPR032828">
    <property type="entry name" value="PolyA_RNA-bd"/>
</dbReference>
<dbReference type="InterPro" id="IPR050124">
    <property type="entry name" value="tRNA_CCA-adding_enzyme"/>
</dbReference>
<dbReference type="NCBIfam" id="NF008137">
    <property type="entry name" value="PRK10885.1"/>
    <property type="match status" value="1"/>
</dbReference>
<dbReference type="PANTHER" id="PTHR47545">
    <property type="entry name" value="MULTIFUNCTIONAL CCA PROTEIN"/>
    <property type="match status" value="1"/>
</dbReference>
<dbReference type="PANTHER" id="PTHR47545:SF1">
    <property type="entry name" value="MULTIFUNCTIONAL CCA PROTEIN"/>
    <property type="match status" value="1"/>
</dbReference>
<dbReference type="Pfam" id="PF01966">
    <property type="entry name" value="HD"/>
    <property type="match status" value="1"/>
</dbReference>
<dbReference type="Pfam" id="PF01743">
    <property type="entry name" value="PolyA_pol"/>
    <property type="match status" value="1"/>
</dbReference>
<dbReference type="Pfam" id="PF12627">
    <property type="entry name" value="PolyA_pol_RNAbd"/>
    <property type="match status" value="1"/>
</dbReference>
<dbReference type="PIRSF" id="PIRSF000813">
    <property type="entry name" value="CCA_bact"/>
    <property type="match status" value="1"/>
</dbReference>
<dbReference type="SMART" id="SM00471">
    <property type="entry name" value="HDc"/>
    <property type="match status" value="1"/>
</dbReference>
<dbReference type="SUPFAM" id="SSF81301">
    <property type="entry name" value="Nucleotidyltransferase"/>
    <property type="match status" value="1"/>
</dbReference>
<dbReference type="SUPFAM" id="SSF81891">
    <property type="entry name" value="Poly A polymerase C-terminal region-like"/>
    <property type="match status" value="1"/>
</dbReference>
<dbReference type="PROSITE" id="PS51831">
    <property type="entry name" value="HD"/>
    <property type="match status" value="1"/>
</dbReference>
<protein>
    <recommendedName>
        <fullName evidence="1">Multifunctional CCA protein</fullName>
    </recommendedName>
    <domain>
        <recommendedName>
            <fullName evidence="1">CCA-adding enzyme</fullName>
            <ecNumber evidence="1">2.7.7.72</ecNumber>
        </recommendedName>
        <alternativeName>
            <fullName evidence="1">CCA tRNA nucleotidyltransferase</fullName>
        </alternativeName>
        <alternativeName>
            <fullName evidence="1">tRNA CCA-pyrophosphorylase</fullName>
        </alternativeName>
        <alternativeName>
            <fullName evidence="1">tRNA adenylyl-/cytidylyl-transferase</fullName>
        </alternativeName>
        <alternativeName>
            <fullName evidence="1">tRNA nucleotidyltransferase</fullName>
        </alternativeName>
        <alternativeName>
            <fullName evidence="1">tRNA-NT</fullName>
        </alternativeName>
    </domain>
    <domain>
        <recommendedName>
            <fullName evidence="1">2'-nucleotidase</fullName>
            <ecNumber evidence="1">3.1.3.-</ecNumber>
        </recommendedName>
    </domain>
    <domain>
        <recommendedName>
            <fullName evidence="1">2',3'-cyclic phosphodiesterase</fullName>
            <ecNumber evidence="1">3.1.4.-</ecNumber>
        </recommendedName>
    </domain>
    <domain>
        <recommendedName>
            <fullName evidence="1">Phosphatase</fullName>
            <ecNumber evidence="1">3.1.3.-</ecNumber>
        </recommendedName>
    </domain>
</protein>
<comment type="function">
    <text evidence="1">Catalyzes the addition and repair of the essential 3'-terminal CCA sequence in tRNAs without using a nucleic acid template. Adds these three nucleotides in the order of C, C, and A to the tRNA nucleotide-73, using CTP and ATP as substrates and producing inorganic pyrophosphate. tRNA 3'-terminal CCA addition is required both for tRNA processing and repair. Also involved in tRNA surveillance by mediating tandem CCA addition to generate a CCACCA at the 3' terminus of unstable tRNAs. While stable tRNAs receive only 3'-terminal CCA, unstable tRNAs are marked with CCACCA and rapidly degraded.</text>
</comment>
<comment type="catalytic activity">
    <reaction evidence="1">
        <text>a tRNA precursor + 2 CTP + ATP = a tRNA with a 3' CCA end + 3 diphosphate</text>
        <dbReference type="Rhea" id="RHEA:14433"/>
        <dbReference type="Rhea" id="RHEA-COMP:10465"/>
        <dbReference type="Rhea" id="RHEA-COMP:10468"/>
        <dbReference type="ChEBI" id="CHEBI:30616"/>
        <dbReference type="ChEBI" id="CHEBI:33019"/>
        <dbReference type="ChEBI" id="CHEBI:37563"/>
        <dbReference type="ChEBI" id="CHEBI:74896"/>
        <dbReference type="ChEBI" id="CHEBI:83071"/>
        <dbReference type="EC" id="2.7.7.72"/>
    </reaction>
</comment>
<comment type="catalytic activity">
    <reaction evidence="1">
        <text>a tRNA with a 3' CCA end + 2 CTP + ATP = a tRNA with a 3' CCACCA end + 3 diphosphate</text>
        <dbReference type="Rhea" id="RHEA:76235"/>
        <dbReference type="Rhea" id="RHEA-COMP:10468"/>
        <dbReference type="Rhea" id="RHEA-COMP:18655"/>
        <dbReference type="ChEBI" id="CHEBI:30616"/>
        <dbReference type="ChEBI" id="CHEBI:33019"/>
        <dbReference type="ChEBI" id="CHEBI:37563"/>
        <dbReference type="ChEBI" id="CHEBI:83071"/>
        <dbReference type="ChEBI" id="CHEBI:195187"/>
    </reaction>
    <physiologicalReaction direction="left-to-right" evidence="1">
        <dbReference type="Rhea" id="RHEA:76236"/>
    </physiologicalReaction>
</comment>
<comment type="cofactor">
    <cofactor evidence="1">
        <name>Mg(2+)</name>
        <dbReference type="ChEBI" id="CHEBI:18420"/>
    </cofactor>
    <text evidence="1">Magnesium is required for nucleotidyltransferase activity.</text>
</comment>
<comment type="cofactor">
    <cofactor evidence="1">
        <name>Ni(2+)</name>
        <dbReference type="ChEBI" id="CHEBI:49786"/>
    </cofactor>
    <text evidence="1">Nickel for phosphatase activity.</text>
</comment>
<comment type="subunit">
    <text evidence="1">Monomer. Can also form homodimers and oligomers.</text>
</comment>
<comment type="domain">
    <text evidence="1">Comprises two domains: an N-terminal domain containing the nucleotidyltransferase activity and a C-terminal HD domain associated with both phosphodiesterase and phosphatase activities.</text>
</comment>
<comment type="miscellaneous">
    <text evidence="1">A single active site specifically recognizes both ATP and CTP and is responsible for their addition.</text>
</comment>
<comment type="similarity">
    <text evidence="1">Belongs to the tRNA nucleotidyltransferase/poly(A) polymerase family. Bacterial CCA-adding enzyme type 1 subfamily.</text>
</comment>